<protein>
    <recommendedName>
        <fullName evidence="1">3-isopropylmalate dehydratase large subunit</fullName>
        <ecNumber evidence="1">4.2.1.33</ecNumber>
    </recommendedName>
    <alternativeName>
        <fullName evidence="1">Alpha-IPM isomerase</fullName>
        <shortName evidence="1">IPMI</shortName>
    </alternativeName>
    <alternativeName>
        <fullName evidence="1">Isopropylmalate isomerase</fullName>
    </alternativeName>
</protein>
<reference key="1">
    <citation type="journal article" date="2009" name="Environ. Microbiol.">
        <title>The genome of Polaromonas naphthalenivorans strain CJ2, isolated from coal tar-contaminated sediment, reveals physiological and metabolic versatility and evolution through extensive horizontal gene transfer.</title>
        <authorList>
            <person name="Yagi J.M."/>
            <person name="Sims D."/>
            <person name="Brettin T."/>
            <person name="Bruce D."/>
            <person name="Madsen E.L."/>
        </authorList>
    </citation>
    <scope>NUCLEOTIDE SEQUENCE [LARGE SCALE GENOMIC DNA]</scope>
    <source>
        <strain>CJ2</strain>
    </source>
</reference>
<dbReference type="EC" id="4.2.1.33" evidence="1"/>
<dbReference type="EMBL" id="CP000529">
    <property type="protein sequence ID" value="ABM38338.1"/>
    <property type="molecule type" value="Genomic_DNA"/>
</dbReference>
<dbReference type="RefSeq" id="WP_011802410.1">
    <property type="nucleotide sequence ID" value="NC_008781.1"/>
</dbReference>
<dbReference type="SMR" id="A1VRR0"/>
<dbReference type="STRING" id="365044.Pnap_3039"/>
<dbReference type="KEGG" id="pna:Pnap_3039"/>
<dbReference type="eggNOG" id="COG0065">
    <property type="taxonomic scope" value="Bacteria"/>
</dbReference>
<dbReference type="HOGENOM" id="CLU_006714_3_4_4"/>
<dbReference type="OrthoDB" id="9802769at2"/>
<dbReference type="UniPathway" id="UPA00048">
    <property type="reaction ID" value="UER00071"/>
</dbReference>
<dbReference type="Proteomes" id="UP000000644">
    <property type="component" value="Chromosome"/>
</dbReference>
<dbReference type="GO" id="GO:0003861">
    <property type="term" value="F:3-isopropylmalate dehydratase activity"/>
    <property type="evidence" value="ECO:0007669"/>
    <property type="project" value="UniProtKB-UniRule"/>
</dbReference>
<dbReference type="GO" id="GO:0051539">
    <property type="term" value="F:4 iron, 4 sulfur cluster binding"/>
    <property type="evidence" value="ECO:0007669"/>
    <property type="project" value="UniProtKB-KW"/>
</dbReference>
<dbReference type="GO" id="GO:0046872">
    <property type="term" value="F:metal ion binding"/>
    <property type="evidence" value="ECO:0007669"/>
    <property type="project" value="UniProtKB-KW"/>
</dbReference>
<dbReference type="GO" id="GO:0009098">
    <property type="term" value="P:L-leucine biosynthetic process"/>
    <property type="evidence" value="ECO:0007669"/>
    <property type="project" value="UniProtKB-UniRule"/>
</dbReference>
<dbReference type="CDD" id="cd01583">
    <property type="entry name" value="IPMI"/>
    <property type="match status" value="1"/>
</dbReference>
<dbReference type="FunFam" id="3.30.499.10:FF:000007">
    <property type="entry name" value="3-isopropylmalate dehydratase large subunit"/>
    <property type="match status" value="1"/>
</dbReference>
<dbReference type="Gene3D" id="3.30.499.10">
    <property type="entry name" value="Aconitase, domain 3"/>
    <property type="match status" value="2"/>
</dbReference>
<dbReference type="HAMAP" id="MF_01026">
    <property type="entry name" value="LeuC_type1"/>
    <property type="match status" value="1"/>
</dbReference>
<dbReference type="InterPro" id="IPR004430">
    <property type="entry name" value="3-IsopropMal_deHydase_lsu"/>
</dbReference>
<dbReference type="InterPro" id="IPR015931">
    <property type="entry name" value="Acnase/IPM_dHydase_lsu_aba_1/3"/>
</dbReference>
<dbReference type="InterPro" id="IPR001030">
    <property type="entry name" value="Acoase/IPM_deHydtase_lsu_aba"/>
</dbReference>
<dbReference type="InterPro" id="IPR018136">
    <property type="entry name" value="Aconitase_4Fe-4S_BS"/>
</dbReference>
<dbReference type="InterPro" id="IPR036008">
    <property type="entry name" value="Aconitase_4Fe-4S_dom"/>
</dbReference>
<dbReference type="InterPro" id="IPR050067">
    <property type="entry name" value="IPM_dehydratase_rel_enz"/>
</dbReference>
<dbReference type="InterPro" id="IPR033941">
    <property type="entry name" value="IPMI_cat"/>
</dbReference>
<dbReference type="NCBIfam" id="TIGR00170">
    <property type="entry name" value="leuC"/>
    <property type="match status" value="1"/>
</dbReference>
<dbReference type="NCBIfam" id="NF004016">
    <property type="entry name" value="PRK05478.1"/>
    <property type="match status" value="1"/>
</dbReference>
<dbReference type="NCBIfam" id="NF009116">
    <property type="entry name" value="PRK12466.1"/>
    <property type="match status" value="1"/>
</dbReference>
<dbReference type="PANTHER" id="PTHR43822:SF9">
    <property type="entry name" value="3-ISOPROPYLMALATE DEHYDRATASE"/>
    <property type="match status" value="1"/>
</dbReference>
<dbReference type="PANTHER" id="PTHR43822">
    <property type="entry name" value="HOMOACONITASE, MITOCHONDRIAL-RELATED"/>
    <property type="match status" value="1"/>
</dbReference>
<dbReference type="Pfam" id="PF00330">
    <property type="entry name" value="Aconitase"/>
    <property type="match status" value="1"/>
</dbReference>
<dbReference type="PRINTS" id="PR00415">
    <property type="entry name" value="ACONITASE"/>
</dbReference>
<dbReference type="SUPFAM" id="SSF53732">
    <property type="entry name" value="Aconitase iron-sulfur domain"/>
    <property type="match status" value="1"/>
</dbReference>
<dbReference type="PROSITE" id="PS00450">
    <property type="entry name" value="ACONITASE_1"/>
    <property type="match status" value="1"/>
</dbReference>
<dbReference type="PROSITE" id="PS01244">
    <property type="entry name" value="ACONITASE_2"/>
    <property type="match status" value="1"/>
</dbReference>
<comment type="function">
    <text evidence="1">Catalyzes the isomerization between 2-isopropylmalate and 3-isopropylmalate, via the formation of 2-isopropylmaleate.</text>
</comment>
<comment type="catalytic activity">
    <reaction evidence="1">
        <text>(2R,3S)-3-isopropylmalate = (2S)-2-isopropylmalate</text>
        <dbReference type="Rhea" id="RHEA:32287"/>
        <dbReference type="ChEBI" id="CHEBI:1178"/>
        <dbReference type="ChEBI" id="CHEBI:35121"/>
        <dbReference type="EC" id="4.2.1.33"/>
    </reaction>
</comment>
<comment type="cofactor">
    <cofactor evidence="1">
        <name>[4Fe-4S] cluster</name>
        <dbReference type="ChEBI" id="CHEBI:49883"/>
    </cofactor>
    <text evidence="1">Binds 1 [4Fe-4S] cluster per subunit.</text>
</comment>
<comment type="pathway">
    <text evidence="1">Amino-acid biosynthesis; L-leucine biosynthesis; L-leucine from 3-methyl-2-oxobutanoate: step 2/4.</text>
</comment>
<comment type="subunit">
    <text evidence="1">Heterodimer of LeuC and LeuD.</text>
</comment>
<comment type="similarity">
    <text evidence="1">Belongs to the aconitase/IPM isomerase family. LeuC type 1 subfamily.</text>
</comment>
<proteinExistence type="inferred from homology"/>
<accession>A1VRR0</accession>
<name>LEUC_POLNA</name>
<gene>
    <name evidence="1" type="primary">leuC</name>
    <name type="ordered locus">Pnap_3039</name>
</gene>
<sequence length="483" mass="51777">MGRTLYDKIWDEHVVHTEEDGTSILYIDRHLVHEVTSPQAFEGLREAGRKVWRISSIVATADHNTPTTGWELGYDGITDLVSKEQITTLDANIKEFGAAAFFPFMSKRQGIVHVIGPENGATLPGMTVVCGDSHTSTHGAFGALAHGIGTSEVEHVMATQTLLAKKAKNMLIKVEGAVTKGVTAKDIVLAIIGKIGTAGGTGYTIEFAGSAIRALSMEGRMTVCNMAIEGGARAGLVAVDAKTIEYLKGRLLAPGTDSVTGKFVGGPEWDMAARYWATLHSDADATFDAVVELDASQILPQVSWGTSPEMVLSIEDRVPDPEKEKDANKRGAIERALTYMGLEPGKALNDLYIDKVFIGSCTNSRIEDMREAAAVVKHIGQKVAKNVKLAMVVPGSGLVKEQAEREGLDKIFIAAGFEWREPGCSMCLAMNADRLEPGERCASTSNRNFEGRQGAGGRTHLVSPAMAAAAAVHGHFVDIRKFV</sequence>
<keyword id="KW-0004">4Fe-4S</keyword>
<keyword id="KW-0028">Amino-acid biosynthesis</keyword>
<keyword id="KW-0100">Branched-chain amino acid biosynthesis</keyword>
<keyword id="KW-0408">Iron</keyword>
<keyword id="KW-0411">Iron-sulfur</keyword>
<keyword id="KW-0432">Leucine biosynthesis</keyword>
<keyword id="KW-0456">Lyase</keyword>
<keyword id="KW-0479">Metal-binding</keyword>
<keyword id="KW-1185">Reference proteome</keyword>
<evidence type="ECO:0000255" key="1">
    <source>
        <dbReference type="HAMAP-Rule" id="MF_01026"/>
    </source>
</evidence>
<organism>
    <name type="scientific">Polaromonas naphthalenivorans (strain CJ2)</name>
    <dbReference type="NCBI Taxonomy" id="365044"/>
    <lineage>
        <taxon>Bacteria</taxon>
        <taxon>Pseudomonadati</taxon>
        <taxon>Pseudomonadota</taxon>
        <taxon>Betaproteobacteria</taxon>
        <taxon>Burkholderiales</taxon>
        <taxon>Comamonadaceae</taxon>
        <taxon>Polaromonas</taxon>
    </lineage>
</organism>
<feature type="chain" id="PRO_1000063580" description="3-isopropylmalate dehydratase large subunit">
    <location>
        <begin position="1"/>
        <end position="483"/>
    </location>
</feature>
<feature type="binding site" evidence="1">
    <location>
        <position position="361"/>
    </location>
    <ligand>
        <name>[4Fe-4S] cluster</name>
        <dbReference type="ChEBI" id="CHEBI:49883"/>
    </ligand>
</feature>
<feature type="binding site" evidence="1">
    <location>
        <position position="424"/>
    </location>
    <ligand>
        <name>[4Fe-4S] cluster</name>
        <dbReference type="ChEBI" id="CHEBI:49883"/>
    </ligand>
</feature>
<feature type="binding site" evidence="1">
    <location>
        <position position="427"/>
    </location>
    <ligand>
        <name>[4Fe-4S] cluster</name>
        <dbReference type="ChEBI" id="CHEBI:49883"/>
    </ligand>
</feature>